<evidence type="ECO:0000255" key="1">
    <source>
        <dbReference type="HAMAP-Rule" id="MF_00038"/>
    </source>
</evidence>
<comment type="function">
    <text evidence="1">Catalyzes the initial step of the lipid cycle reactions in the biosynthesis of the cell wall peptidoglycan: transfers peptidoglycan precursor phospho-MurNAc-pentapeptide from UDP-MurNAc-pentapeptide onto the lipid carrier undecaprenyl phosphate, yielding undecaprenyl-pyrophosphoryl-MurNAc-pentapeptide, known as lipid I.</text>
</comment>
<comment type="catalytic activity">
    <reaction evidence="1">
        <text>UDP-N-acetyl-alpha-D-muramoyl-L-alanyl-gamma-D-glutamyl-meso-2,6-diaminopimeloyl-D-alanyl-D-alanine + di-trans,octa-cis-undecaprenyl phosphate = di-trans,octa-cis-undecaprenyl diphospho-N-acetyl-alpha-D-muramoyl-L-alanyl-D-glutamyl-meso-2,6-diaminopimeloyl-D-alanyl-D-alanine + UMP</text>
        <dbReference type="Rhea" id="RHEA:28386"/>
        <dbReference type="ChEBI" id="CHEBI:57865"/>
        <dbReference type="ChEBI" id="CHEBI:60392"/>
        <dbReference type="ChEBI" id="CHEBI:61386"/>
        <dbReference type="ChEBI" id="CHEBI:61387"/>
        <dbReference type="EC" id="2.7.8.13"/>
    </reaction>
</comment>
<comment type="cofactor">
    <cofactor evidence="1">
        <name>Mg(2+)</name>
        <dbReference type="ChEBI" id="CHEBI:18420"/>
    </cofactor>
</comment>
<comment type="pathway">
    <text evidence="1">Cell wall biogenesis; peptidoglycan biosynthesis.</text>
</comment>
<comment type="subcellular location">
    <subcellularLocation>
        <location evidence="1">Cell membrane</location>
        <topology evidence="1">Multi-pass membrane protein</topology>
    </subcellularLocation>
</comment>
<comment type="similarity">
    <text evidence="1">Belongs to the glycosyltransferase 4 family. MraY subfamily.</text>
</comment>
<protein>
    <recommendedName>
        <fullName evidence="1">Phospho-N-acetylmuramoyl-pentapeptide-transferase</fullName>
        <ecNumber evidence="1">2.7.8.13</ecNumber>
    </recommendedName>
    <alternativeName>
        <fullName evidence="1">UDP-MurNAc-pentapeptide phosphotransferase</fullName>
    </alternativeName>
</protein>
<accession>Q3AAE3</accession>
<keyword id="KW-0131">Cell cycle</keyword>
<keyword id="KW-0132">Cell division</keyword>
<keyword id="KW-1003">Cell membrane</keyword>
<keyword id="KW-0133">Cell shape</keyword>
<keyword id="KW-0961">Cell wall biogenesis/degradation</keyword>
<keyword id="KW-0460">Magnesium</keyword>
<keyword id="KW-0472">Membrane</keyword>
<keyword id="KW-0479">Metal-binding</keyword>
<keyword id="KW-0573">Peptidoglycan synthesis</keyword>
<keyword id="KW-1185">Reference proteome</keyword>
<keyword id="KW-0808">Transferase</keyword>
<keyword id="KW-0812">Transmembrane</keyword>
<keyword id="KW-1133">Transmembrane helix</keyword>
<organism>
    <name type="scientific">Carboxydothermus hydrogenoformans (strain ATCC BAA-161 / DSM 6008 / Z-2901)</name>
    <dbReference type="NCBI Taxonomy" id="246194"/>
    <lineage>
        <taxon>Bacteria</taxon>
        <taxon>Bacillati</taxon>
        <taxon>Bacillota</taxon>
        <taxon>Clostridia</taxon>
        <taxon>Thermoanaerobacterales</taxon>
        <taxon>Thermoanaerobacteraceae</taxon>
        <taxon>Carboxydothermus</taxon>
    </lineage>
</organism>
<feature type="chain" id="PRO_0000235444" description="Phospho-N-acetylmuramoyl-pentapeptide-transferase">
    <location>
        <begin position="1"/>
        <end position="325"/>
    </location>
</feature>
<feature type="transmembrane region" description="Helical" evidence="1">
    <location>
        <begin position="9"/>
        <end position="29"/>
    </location>
</feature>
<feature type="transmembrane region" description="Helical" evidence="1">
    <location>
        <begin position="53"/>
        <end position="73"/>
    </location>
</feature>
<feature type="transmembrane region" description="Helical" evidence="1">
    <location>
        <begin position="77"/>
        <end position="97"/>
    </location>
</feature>
<feature type="transmembrane region" description="Helical" evidence="1">
    <location>
        <begin position="112"/>
        <end position="132"/>
    </location>
</feature>
<feature type="transmembrane region" description="Helical" evidence="1">
    <location>
        <begin position="154"/>
        <end position="174"/>
    </location>
</feature>
<feature type="transmembrane region" description="Helical" evidence="1">
    <location>
        <begin position="182"/>
        <end position="202"/>
    </location>
</feature>
<feature type="transmembrane region" description="Helical" evidence="1">
    <location>
        <begin position="204"/>
        <end position="224"/>
    </location>
</feature>
<feature type="transmembrane region" description="Helical" evidence="1">
    <location>
        <begin position="231"/>
        <end position="251"/>
    </location>
</feature>
<feature type="transmembrane region" description="Helical" evidence="1">
    <location>
        <begin position="257"/>
        <end position="277"/>
    </location>
</feature>
<feature type="transmembrane region" description="Helical" evidence="1">
    <location>
        <begin position="305"/>
        <end position="325"/>
    </location>
</feature>
<proteinExistence type="inferred from homology"/>
<reference key="1">
    <citation type="journal article" date="2005" name="PLoS Genet.">
        <title>Life in hot carbon monoxide: the complete genome sequence of Carboxydothermus hydrogenoformans Z-2901.</title>
        <authorList>
            <person name="Wu M."/>
            <person name="Ren Q."/>
            <person name="Durkin A.S."/>
            <person name="Daugherty S.C."/>
            <person name="Brinkac L.M."/>
            <person name="Dodson R.J."/>
            <person name="Madupu R."/>
            <person name="Sullivan S.A."/>
            <person name="Kolonay J.F."/>
            <person name="Nelson W.C."/>
            <person name="Tallon L.J."/>
            <person name="Jones K.M."/>
            <person name="Ulrich L.E."/>
            <person name="Gonzalez J.M."/>
            <person name="Zhulin I.B."/>
            <person name="Robb F.T."/>
            <person name="Eisen J.A."/>
        </authorList>
    </citation>
    <scope>NUCLEOTIDE SEQUENCE [LARGE SCALE GENOMIC DNA]</scope>
    <source>
        <strain>ATCC BAA-161 / DSM 6008 / Z-2901</strain>
    </source>
</reference>
<name>MRAY_CARHZ</name>
<dbReference type="EC" id="2.7.8.13" evidence="1"/>
<dbReference type="EMBL" id="CP000141">
    <property type="protein sequence ID" value="ABB14480.1"/>
    <property type="molecule type" value="Genomic_DNA"/>
</dbReference>
<dbReference type="RefSeq" id="WP_011344964.1">
    <property type="nucleotide sequence ID" value="NC_007503.1"/>
</dbReference>
<dbReference type="SMR" id="Q3AAE3"/>
<dbReference type="FunCoup" id="Q3AAE3">
    <property type="interactions" value="413"/>
</dbReference>
<dbReference type="STRING" id="246194.CHY_2072"/>
<dbReference type="KEGG" id="chy:CHY_2072"/>
<dbReference type="eggNOG" id="COG0472">
    <property type="taxonomic scope" value="Bacteria"/>
</dbReference>
<dbReference type="HOGENOM" id="CLU_023982_0_1_9"/>
<dbReference type="InParanoid" id="Q3AAE3"/>
<dbReference type="OrthoDB" id="9805475at2"/>
<dbReference type="UniPathway" id="UPA00219"/>
<dbReference type="Proteomes" id="UP000002706">
    <property type="component" value="Chromosome"/>
</dbReference>
<dbReference type="GO" id="GO:0005886">
    <property type="term" value="C:plasma membrane"/>
    <property type="evidence" value="ECO:0007669"/>
    <property type="project" value="UniProtKB-SubCell"/>
</dbReference>
<dbReference type="GO" id="GO:0046872">
    <property type="term" value="F:metal ion binding"/>
    <property type="evidence" value="ECO:0007669"/>
    <property type="project" value="UniProtKB-KW"/>
</dbReference>
<dbReference type="GO" id="GO:0008963">
    <property type="term" value="F:phospho-N-acetylmuramoyl-pentapeptide-transferase activity"/>
    <property type="evidence" value="ECO:0007669"/>
    <property type="project" value="UniProtKB-UniRule"/>
</dbReference>
<dbReference type="GO" id="GO:0051992">
    <property type="term" value="F:UDP-N-acetylmuramoyl-L-alanyl-D-glutamyl-meso-2,6-diaminopimelyl-D-alanyl-D-alanine:undecaprenyl-phosphate transferase activity"/>
    <property type="evidence" value="ECO:0007669"/>
    <property type="project" value="RHEA"/>
</dbReference>
<dbReference type="GO" id="GO:0051301">
    <property type="term" value="P:cell division"/>
    <property type="evidence" value="ECO:0007669"/>
    <property type="project" value="UniProtKB-KW"/>
</dbReference>
<dbReference type="GO" id="GO:0071555">
    <property type="term" value="P:cell wall organization"/>
    <property type="evidence" value="ECO:0007669"/>
    <property type="project" value="UniProtKB-KW"/>
</dbReference>
<dbReference type="GO" id="GO:0009252">
    <property type="term" value="P:peptidoglycan biosynthetic process"/>
    <property type="evidence" value="ECO:0007669"/>
    <property type="project" value="UniProtKB-UniRule"/>
</dbReference>
<dbReference type="GO" id="GO:0008360">
    <property type="term" value="P:regulation of cell shape"/>
    <property type="evidence" value="ECO:0007669"/>
    <property type="project" value="UniProtKB-KW"/>
</dbReference>
<dbReference type="CDD" id="cd06852">
    <property type="entry name" value="GT_MraY"/>
    <property type="match status" value="1"/>
</dbReference>
<dbReference type="HAMAP" id="MF_00038">
    <property type="entry name" value="MraY"/>
    <property type="match status" value="1"/>
</dbReference>
<dbReference type="InterPro" id="IPR000715">
    <property type="entry name" value="Glycosyl_transferase_4"/>
</dbReference>
<dbReference type="InterPro" id="IPR003524">
    <property type="entry name" value="PNAcMuramoyl-5peptid_Trfase"/>
</dbReference>
<dbReference type="InterPro" id="IPR018480">
    <property type="entry name" value="PNAcMuramoyl-5peptid_Trfase_CS"/>
</dbReference>
<dbReference type="NCBIfam" id="TIGR00445">
    <property type="entry name" value="mraY"/>
    <property type="match status" value="1"/>
</dbReference>
<dbReference type="PANTHER" id="PTHR22926">
    <property type="entry name" value="PHOSPHO-N-ACETYLMURAMOYL-PENTAPEPTIDE-TRANSFERASE"/>
    <property type="match status" value="1"/>
</dbReference>
<dbReference type="PANTHER" id="PTHR22926:SF5">
    <property type="entry name" value="PHOSPHO-N-ACETYLMURAMOYL-PENTAPEPTIDE-TRANSFERASE HOMOLOG"/>
    <property type="match status" value="1"/>
</dbReference>
<dbReference type="Pfam" id="PF00953">
    <property type="entry name" value="Glycos_transf_4"/>
    <property type="match status" value="1"/>
</dbReference>
<dbReference type="Pfam" id="PF10555">
    <property type="entry name" value="MraY_sig1"/>
    <property type="match status" value="1"/>
</dbReference>
<dbReference type="PROSITE" id="PS01347">
    <property type="entry name" value="MRAY_1"/>
    <property type="match status" value="1"/>
</dbReference>
<dbReference type="PROSITE" id="PS01348">
    <property type="entry name" value="MRAY_2"/>
    <property type="match status" value="1"/>
</dbReference>
<sequence length="325" mass="35413">MVITKGVTALLVSFFVALGGGRVLIPWLLKLKIGQTVRTEGPKRHLKKSGTPTMGGIIFLLSLVVTVVVFQAFDAKTLLLLITTLLFGLLGFLDDYLKVVLRRPLGLRAREKLLGQVIFSLVLTFGAVAFLGRGTDWYIPFSRLLLGEPRYLELGNVFFFAATIFIMVGFANAVNLTDGVDGLCSSVTLIVMSFFAMTSLALKEKGLFIFALALMGGLVGFLVYNRHPAKVFMGDTGSLALGAAVAGFAVLTQTELFLLLVGLIYVVETLSVIIQVIVYQLTGKRVFKMSPLHHHFELSGWSENKIVLVFSLVTLIMVLISGYGL</sequence>
<gene>
    <name evidence="1" type="primary">mraY</name>
    <name type="ordered locus">CHY_2072</name>
</gene>